<reference key="1">
    <citation type="journal article" date="2003" name="Mol. Biol. Evol.">
        <title>Gene diversity patterns at 10 X-chromosomal loci in humans and chimpanzees.</title>
        <authorList>
            <person name="Kitano T."/>
            <person name="Schwarz C."/>
            <person name="Nickel B."/>
            <person name="Paeaebo S."/>
        </authorList>
    </citation>
    <scope>NUCLEOTIDE SEQUENCE [MRNA]</scope>
</reference>
<evidence type="ECO:0000250" key="1"/>
<evidence type="ECO:0000250" key="2">
    <source>
        <dbReference type="UniProtKB" id="P0CAX5"/>
    </source>
</evidence>
<evidence type="ECO:0000250" key="3">
    <source>
        <dbReference type="UniProtKB" id="Q99J31"/>
    </source>
</evidence>
<evidence type="ECO:0000255" key="4">
    <source>
        <dbReference type="PROSITE-ProRule" id="PRU00145"/>
    </source>
</evidence>
<evidence type="ECO:0000255" key="5">
    <source>
        <dbReference type="PROSITE-ProRule" id="PRU00172"/>
    </source>
</evidence>
<evidence type="ECO:0000256" key="6">
    <source>
        <dbReference type="SAM" id="MobiDB-lite"/>
    </source>
</evidence>
<keyword id="KW-0966">Cell projection</keyword>
<keyword id="KW-0963">Cytoplasm</keyword>
<keyword id="KW-0254">Endocytosis</keyword>
<keyword id="KW-0343">GTPase activation</keyword>
<keyword id="KW-0524">Neurogenesis</keyword>
<keyword id="KW-0770">Synapse</keyword>
<proteinExistence type="evidence at transcript level"/>
<accession>Q7YQL5</accession>
<dbReference type="EMBL" id="AB102658">
    <property type="protein sequence ID" value="BAC81127.1"/>
    <property type="molecule type" value="mRNA"/>
</dbReference>
<dbReference type="RefSeq" id="XP_054327909.1">
    <property type="nucleotide sequence ID" value="XM_054471934.2"/>
</dbReference>
<dbReference type="RefSeq" id="XP_063516801.1">
    <property type="nucleotide sequence ID" value="XM_063660731.1"/>
</dbReference>
<dbReference type="SMR" id="Q7YQL5"/>
<dbReference type="GeneID" id="129024740"/>
<dbReference type="OrthoDB" id="3183924at2759"/>
<dbReference type="GO" id="GO:0015629">
    <property type="term" value="C:actin cytoskeleton"/>
    <property type="evidence" value="ECO:0007669"/>
    <property type="project" value="TreeGrafter"/>
</dbReference>
<dbReference type="GO" id="GO:0005737">
    <property type="term" value="C:cytoplasm"/>
    <property type="evidence" value="ECO:0007669"/>
    <property type="project" value="UniProtKB-SubCell"/>
</dbReference>
<dbReference type="GO" id="GO:0043197">
    <property type="term" value="C:dendritic spine"/>
    <property type="evidence" value="ECO:0007669"/>
    <property type="project" value="UniProtKB-SubCell"/>
</dbReference>
<dbReference type="GO" id="GO:0043195">
    <property type="term" value="C:terminal bouton"/>
    <property type="evidence" value="ECO:0007669"/>
    <property type="project" value="TreeGrafter"/>
</dbReference>
<dbReference type="GO" id="GO:0005096">
    <property type="term" value="F:GTPase activator activity"/>
    <property type="evidence" value="ECO:0007669"/>
    <property type="project" value="UniProtKB-KW"/>
</dbReference>
<dbReference type="GO" id="GO:0030036">
    <property type="term" value="P:actin cytoskeleton organization"/>
    <property type="evidence" value="ECO:0007669"/>
    <property type="project" value="TreeGrafter"/>
</dbReference>
<dbReference type="GO" id="GO:0034329">
    <property type="term" value="P:cell junction assembly"/>
    <property type="evidence" value="ECO:0000250"/>
    <property type="project" value="UniProtKB"/>
</dbReference>
<dbReference type="GO" id="GO:0045198">
    <property type="term" value="P:establishment of epithelial cell apical/basal polarity"/>
    <property type="evidence" value="ECO:0000250"/>
    <property type="project" value="UniProtKB"/>
</dbReference>
<dbReference type="GO" id="GO:1901799">
    <property type="term" value="P:negative regulation of proteasomal protein catabolic process"/>
    <property type="evidence" value="ECO:0007669"/>
    <property type="project" value="TreeGrafter"/>
</dbReference>
<dbReference type="GO" id="GO:0007399">
    <property type="term" value="P:nervous system development"/>
    <property type="evidence" value="ECO:0007669"/>
    <property type="project" value="UniProtKB-KW"/>
</dbReference>
<dbReference type="GO" id="GO:0030100">
    <property type="term" value="P:regulation of endocytosis"/>
    <property type="evidence" value="ECO:0007669"/>
    <property type="project" value="TreeGrafter"/>
</dbReference>
<dbReference type="GO" id="GO:0051966">
    <property type="term" value="P:regulation of synaptic transmission, glutamatergic"/>
    <property type="evidence" value="ECO:0007669"/>
    <property type="project" value="TreeGrafter"/>
</dbReference>
<dbReference type="GO" id="GO:0007165">
    <property type="term" value="P:signal transduction"/>
    <property type="evidence" value="ECO:0007669"/>
    <property type="project" value="InterPro"/>
</dbReference>
<dbReference type="GO" id="GO:0048488">
    <property type="term" value="P:synaptic vesicle endocytosis"/>
    <property type="evidence" value="ECO:0007669"/>
    <property type="project" value="TreeGrafter"/>
</dbReference>
<dbReference type="CDD" id="cd01249">
    <property type="entry name" value="BAR-PH_GRAF_family"/>
    <property type="match status" value="1"/>
</dbReference>
<dbReference type="CDD" id="cd07633">
    <property type="entry name" value="BAR_OPHN1"/>
    <property type="match status" value="1"/>
</dbReference>
<dbReference type="CDD" id="cd04374">
    <property type="entry name" value="RhoGAP_Graf"/>
    <property type="match status" value="1"/>
</dbReference>
<dbReference type="FunFam" id="2.30.29.30:FF:000183">
    <property type="entry name" value="Oligophrenin 1"/>
    <property type="match status" value="1"/>
</dbReference>
<dbReference type="FunFam" id="1.20.1270.60:FF:000001">
    <property type="entry name" value="Rho GTPase-activating protein 26"/>
    <property type="match status" value="1"/>
</dbReference>
<dbReference type="FunFam" id="1.10.555.10:FF:000008">
    <property type="entry name" value="Rho GTPase-activating protein 42"/>
    <property type="match status" value="1"/>
</dbReference>
<dbReference type="Gene3D" id="1.20.1270.60">
    <property type="entry name" value="Arfaptin homology (AH) domain/BAR domain"/>
    <property type="match status" value="1"/>
</dbReference>
<dbReference type="Gene3D" id="2.30.29.30">
    <property type="entry name" value="Pleckstrin-homology domain (PH domain)/Phosphotyrosine-binding domain (PTB)"/>
    <property type="match status" value="1"/>
</dbReference>
<dbReference type="Gene3D" id="1.10.555.10">
    <property type="entry name" value="Rho GTPase activation protein"/>
    <property type="match status" value="1"/>
</dbReference>
<dbReference type="InterPro" id="IPR027267">
    <property type="entry name" value="AH/BAR_dom_sf"/>
</dbReference>
<dbReference type="InterPro" id="IPR004148">
    <property type="entry name" value="BAR_dom"/>
</dbReference>
<dbReference type="InterPro" id="IPR047234">
    <property type="entry name" value="GRAF_fam"/>
</dbReference>
<dbReference type="InterPro" id="IPR047267">
    <property type="entry name" value="OPHN1_BAR"/>
</dbReference>
<dbReference type="InterPro" id="IPR011993">
    <property type="entry name" value="PH-like_dom_sf"/>
</dbReference>
<dbReference type="InterPro" id="IPR001849">
    <property type="entry name" value="PH_domain"/>
</dbReference>
<dbReference type="InterPro" id="IPR047225">
    <property type="entry name" value="PH_GRAF"/>
</dbReference>
<dbReference type="InterPro" id="IPR008936">
    <property type="entry name" value="Rho_GTPase_activation_prot"/>
</dbReference>
<dbReference type="InterPro" id="IPR000198">
    <property type="entry name" value="RhoGAP_dom"/>
</dbReference>
<dbReference type="PANTHER" id="PTHR12552">
    <property type="entry name" value="OLIGOPHRENIN 1"/>
    <property type="match status" value="1"/>
</dbReference>
<dbReference type="PANTHER" id="PTHR12552:SF2">
    <property type="entry name" value="OLIGOPHRENIN-1"/>
    <property type="match status" value="1"/>
</dbReference>
<dbReference type="Pfam" id="PF16746">
    <property type="entry name" value="BAR_3"/>
    <property type="match status" value="1"/>
</dbReference>
<dbReference type="Pfam" id="PF00169">
    <property type="entry name" value="PH"/>
    <property type="match status" value="1"/>
</dbReference>
<dbReference type="Pfam" id="PF00620">
    <property type="entry name" value="RhoGAP"/>
    <property type="match status" value="1"/>
</dbReference>
<dbReference type="SMART" id="SM00233">
    <property type="entry name" value="PH"/>
    <property type="match status" value="1"/>
</dbReference>
<dbReference type="SMART" id="SM00324">
    <property type="entry name" value="RhoGAP"/>
    <property type="match status" value="1"/>
</dbReference>
<dbReference type="SUPFAM" id="SSF103657">
    <property type="entry name" value="BAR/IMD domain-like"/>
    <property type="match status" value="1"/>
</dbReference>
<dbReference type="SUPFAM" id="SSF48350">
    <property type="entry name" value="GTPase activation domain, GAP"/>
    <property type="match status" value="1"/>
</dbReference>
<dbReference type="SUPFAM" id="SSF50729">
    <property type="entry name" value="PH domain-like"/>
    <property type="match status" value="1"/>
</dbReference>
<dbReference type="PROSITE" id="PS50003">
    <property type="entry name" value="PH_DOMAIN"/>
    <property type="match status" value="1"/>
</dbReference>
<dbReference type="PROSITE" id="PS50238">
    <property type="entry name" value="RHOGAP"/>
    <property type="match status" value="1"/>
</dbReference>
<organism>
    <name type="scientific">Pongo pygmaeus</name>
    <name type="common">Bornean orangutan</name>
    <dbReference type="NCBI Taxonomy" id="9600"/>
    <lineage>
        <taxon>Eukaryota</taxon>
        <taxon>Metazoa</taxon>
        <taxon>Chordata</taxon>
        <taxon>Craniata</taxon>
        <taxon>Vertebrata</taxon>
        <taxon>Euteleostomi</taxon>
        <taxon>Mammalia</taxon>
        <taxon>Eutheria</taxon>
        <taxon>Euarchontoglires</taxon>
        <taxon>Primates</taxon>
        <taxon>Haplorrhini</taxon>
        <taxon>Catarrhini</taxon>
        <taxon>Hominidae</taxon>
        <taxon>Pongo</taxon>
    </lineage>
</organism>
<protein>
    <recommendedName>
        <fullName>Oligophrenin-1</fullName>
    </recommendedName>
</protein>
<sequence>MGHPPLEFSDCYLDSPDFRERLKCYEQELERTNKFIKDVIKDGNALISAMRNYSSAVQKFSQTLQSFQFDFIGDTLTDDEINIAESFKEFAELLNEVENERMMMVHNASDLLIKPLENFRKEQIGFTKERKKKFEKDGERFYSLLDRHLHLSSKKKESQLQEADLQVDKERHNFFESSLDYVYQIQEVQESKKFNIVEPVLAFLHSLFISNSLTVELTQDFLPYKQQLQLSLQNTRNHFSSTREEMEELKKRMKEAPQTCKLPGQPTIEGYLYTQEKWALGISWVKYYCQYEKETKTLTMTPMEQKPGAKQGPLDLTLKYCVRRKTESIDKRFCFDIETNERPGTITLQALSEANRRLWMEAMDGKEPIYHSPITKQQEMELNEVGFKFVRKCINIIETKGIKTEGLYRTVGSNIQVQKLLNAFFDPKCPGDVDFHNSDWDIKTITSSLKFYLRNLSEPVMTYRLHKELVSAAKSDNLDYRLGAIHSLVYKLPEKNREMLELLIRHLVNVCEHSKENLMTPSNMGVIFGPTLMRAQEDTVAAMMNIKFQNIVVEILIEHFGKIYLGPPEESAAPPVPPPRVTARRHKPITISKRLLRERTVFYTSSLDESEDEIQHQTPNGTITSSIEPPKPPQHPKLPIQRSGETDPGRKSPSRPISDGKLEPCPEVDVGKLVSRLQDGGTKITPKATNGPMPGSGPTKTPSFHIKRPAPRPLAHHKEGDADSFSKVRPPGEKPTIIRPPVRPPDPPCRAATPQKPEPKPDIVAGNAGEITSSVVASRTRFFETASRKTGSSQGRLPGDES</sequence>
<gene>
    <name type="primary">OPHN1</name>
</gene>
<comment type="function">
    <text evidence="1">Stimulates GTP hydrolysis of members of the Rho family. Its action on RHOA activity and signaling is implicated in growth and stabilization of dendritic spines, and therefore in synaptic function. Critical for the stabilization of AMPA receptors at postsynaptic sites. Critical for the regulation of synaptic vesicle endocytosis at pre-synaptic terminals. Required for the localization of NR1D1 to dendrites, can suppress its repressor activity and protect it from proteasomal degradation (By similarity).</text>
</comment>
<comment type="subunit">
    <text evidence="1">Interacts with HOMER1. Interacts with AMPA receptor complexes. Interacts with SH3GL2 (endophilin-A1) (By similarity). Interacts (via C-terminus) with NR1D1 (By similarity).</text>
</comment>
<comment type="subcellular location">
    <subcellularLocation>
        <location evidence="2">Postsynapse</location>
    </subcellularLocation>
    <subcellularLocation>
        <location evidence="2">Presynapse</location>
    </subcellularLocation>
    <subcellularLocation>
        <location evidence="2">Cell projection</location>
        <location evidence="2">Axon</location>
    </subcellularLocation>
    <subcellularLocation>
        <location evidence="2">Cell projection</location>
        <location evidence="2">Dendritic spine</location>
    </subcellularLocation>
    <subcellularLocation>
        <location evidence="3">Cell projection</location>
        <location evidence="3">Dendrite</location>
    </subcellularLocation>
    <subcellularLocation>
        <location evidence="3">Cytoplasm</location>
    </subcellularLocation>
</comment>
<name>OPHN1_PONPY</name>
<feature type="chain" id="PRO_0000056763" description="Oligophrenin-1">
    <location>
        <begin position="1"/>
        <end position="802"/>
    </location>
</feature>
<feature type="domain" description="PH" evidence="4">
    <location>
        <begin position="265"/>
        <end position="368"/>
    </location>
</feature>
<feature type="domain" description="Rho-GAP" evidence="5">
    <location>
        <begin position="380"/>
        <end position="564"/>
    </location>
</feature>
<feature type="region of interest" description="Disordered" evidence="6">
    <location>
        <begin position="569"/>
        <end position="589"/>
    </location>
</feature>
<feature type="region of interest" description="Disordered" evidence="6">
    <location>
        <begin position="607"/>
        <end position="770"/>
    </location>
</feature>
<feature type="region of interest" description="Disordered" evidence="6">
    <location>
        <begin position="783"/>
        <end position="802"/>
    </location>
</feature>
<feature type="compositionally biased region" description="Polar residues" evidence="6">
    <location>
        <begin position="616"/>
        <end position="627"/>
    </location>
</feature>
<feature type="compositionally biased region" description="Basic and acidic residues" evidence="6">
    <location>
        <begin position="716"/>
        <end position="732"/>
    </location>
</feature>
<feature type="site" description="Arginine finger; crucial for GTP hydrolysis by stabilizing the transition state" evidence="5">
    <location>
        <position position="409"/>
    </location>
</feature>